<name>SP0A_BACSU</name>
<sequence length="267" mass="29691">MEKIKVCVADDNRELVSLLSEYIEGQEDMEVIGVAYNGQECLSLFKEKDPDVLVLDIIMPHLDGLAVLERLRESDLKKQPNVIMLTAFGQEDVTKKAVDLGASYFILKPFDMENLVGHIRQVSGNASSVTHRAPSSQSSIIRSSQPEPKKKNLDASITSIIHEIGVPAHIKGYLYLREAISMVYNDIELLGSITKVLYPDIAKKFNTTASRVERAIRHAIEVAWSRGNIDSISSLFGYTVSMTKAKPTNSEFIAMVADKLRLEHKAS</sequence>
<gene>
    <name type="primary">spo0A</name>
    <name type="synonym">spo0C</name>
    <name type="synonym">spo0G</name>
    <name type="ordered locus">BSU24220</name>
</gene>
<feature type="chain" id="PRO_0000081234" description="Stage 0 sporulation protein A">
    <location>
        <begin position="1"/>
        <end position="267"/>
    </location>
</feature>
<feature type="domain" description="Response regulatory" evidence="3">
    <location>
        <begin position="5"/>
        <end position="123"/>
    </location>
</feature>
<feature type="DNA-binding region" description="H-T-H motif" evidence="2">
    <location>
        <begin position="199"/>
        <end position="218"/>
    </location>
</feature>
<feature type="region of interest" description="Disordered" evidence="4">
    <location>
        <begin position="126"/>
        <end position="150"/>
    </location>
</feature>
<feature type="compositionally biased region" description="Low complexity" evidence="4">
    <location>
        <begin position="135"/>
        <end position="145"/>
    </location>
</feature>
<feature type="binding site" evidence="1">
    <location>
        <position position="10"/>
    </location>
    <ligand>
        <name>Ca(2+)</name>
        <dbReference type="ChEBI" id="CHEBI:29108"/>
    </ligand>
</feature>
<feature type="binding site" evidence="1">
    <location>
        <position position="11"/>
    </location>
    <ligand>
        <name>Ca(2+)</name>
        <dbReference type="ChEBI" id="CHEBI:29108"/>
    </ligand>
</feature>
<feature type="binding site" evidence="1">
    <location>
        <position position="56"/>
    </location>
    <ligand>
        <name>Ca(2+)</name>
        <dbReference type="ChEBI" id="CHEBI:29108"/>
    </ligand>
</feature>
<feature type="modified residue" description="4-aspartylphosphate" evidence="3">
    <location>
        <position position="56"/>
    </location>
</feature>
<feature type="mutagenesis site" description="In SOF-1 mutant." evidence="5">
    <original>N</original>
    <variation>S</variation>
    <location>
        <position position="12"/>
    </location>
</feature>
<feature type="mutagenesis site" description="In COI-1 mutant." evidence="5">
    <original>P</original>
    <variation>S</variation>
    <location>
        <position position="60"/>
    </location>
</feature>
<feature type="mutagenesis site" description="In COI-2 and COI-12 mutants." evidence="5">
    <original>A</original>
    <variation>V</variation>
    <location>
        <position position="87"/>
    </location>
</feature>
<feature type="mutagenesis site" description="In COI-15 mutant." evidence="5">
    <original>Q</original>
    <variation>K</variation>
    <location>
        <position position="90"/>
    </location>
</feature>
<feature type="helix" evidence="8">
    <location>
        <begin position="153"/>
        <end position="164"/>
    </location>
</feature>
<feature type="helix" evidence="8">
    <location>
        <begin position="171"/>
        <end position="185"/>
    </location>
</feature>
<feature type="helix" evidence="8">
    <location>
        <begin position="187"/>
        <end position="191"/>
    </location>
</feature>
<feature type="turn" evidence="8">
    <location>
        <begin position="193"/>
        <end position="196"/>
    </location>
</feature>
<feature type="helix" evidence="8">
    <location>
        <begin position="197"/>
        <end position="204"/>
    </location>
</feature>
<feature type="helix" evidence="8">
    <location>
        <begin position="209"/>
        <end position="225"/>
    </location>
</feature>
<feature type="helix" evidence="8">
    <location>
        <begin position="231"/>
        <end position="235"/>
    </location>
</feature>
<feature type="helix" evidence="8">
    <location>
        <begin position="249"/>
        <end position="262"/>
    </location>
</feature>
<keyword id="KW-0002">3D-structure</keyword>
<keyword id="KW-0010">Activator</keyword>
<keyword id="KW-0106">Calcium</keyword>
<keyword id="KW-0963">Cytoplasm</keyword>
<keyword id="KW-0238">DNA-binding</keyword>
<keyword id="KW-0479">Metal-binding</keyword>
<keyword id="KW-0597">Phosphoprotein</keyword>
<keyword id="KW-1185">Reference proteome</keyword>
<keyword id="KW-0678">Repressor</keyword>
<keyword id="KW-0749">Sporulation</keyword>
<keyword id="KW-0804">Transcription</keyword>
<keyword id="KW-0805">Transcription regulation</keyword>
<keyword id="KW-0902">Two-component regulatory system</keyword>
<comment type="function">
    <text>May play the central regulatory role in sporulation. It may be an element of the effector pathway responsible for the activation of sporulation genes in response to nutritional stress. Spo0A may act in concert with Spo0H (a sigma factor) to control the expression of some genes that are critical to the sporulation process. Repressor of abrB, activator of the spoIIa operon. Binds the DNA sequence 5'-TGNCGAA-3' (0A box).</text>
</comment>
<comment type="cofactor">
    <cofactor evidence="1">
        <name>Ca(2+)</name>
        <dbReference type="ChEBI" id="CHEBI:29108"/>
    </cofactor>
    <text evidence="1">Binds 1 Ca(2+) ion per subunit.</text>
</comment>
<comment type="subunit">
    <text evidence="6">Interacts with small protein YqaH, which is encoded in the skin prophage-like element.</text>
</comment>
<comment type="subcellular location">
    <subcellularLocation>
        <location evidence="7">Cytoplasm</location>
    </subcellularLocation>
</comment>
<comment type="PTM">
    <text>Phosphorylated by KinA and KinB.</text>
</comment>
<comment type="miscellaneous">
    <text>Stage 0 mutants lack the ability to form the asymmetric septum characteristic of the initiation of the sporulation process.</text>
</comment>
<proteinExistence type="evidence at protein level"/>
<reference key="1">
    <citation type="journal article" date="1985" name="Proc. Natl. Acad. Sci. U.S.A.">
        <title>Nucleotide sequences of the sporulation gene spo0A and its mutant genes of Bacillus subtilis.</title>
        <authorList>
            <person name="Kudoh J."/>
            <person name="Ikeuchi T."/>
            <person name="Kurahashi K."/>
        </authorList>
    </citation>
    <scope>NUCLEOTIDE SEQUENCE [GENOMIC DNA]</scope>
</reference>
<reference key="2">
    <citation type="journal article" date="1986" name="Mol. Gen. Genet.">
        <title>Amino-terminal structure of spoOA protein and sequence homology with spoOF and spoOB proteins.</title>
        <authorList>
            <person name="Ikeuchi T."/>
            <person name="Kudoh J."/>
            <person name="Tsunasawa S."/>
        </authorList>
    </citation>
    <scope>NUCLEOTIDE SEQUENCE [GENOMIC DNA]</scope>
</reference>
<reference key="3">
    <citation type="journal article" date="1985" name="Proc. Natl. Acad. Sci. U.S.A.">
        <title>Characterization of the spo0A locus and its deduced product.</title>
        <authorList>
            <person name="Ferrari F.A."/>
            <person name="Trach K.A."/>
            <person name="Le Coq D."/>
            <person name="Spence J."/>
            <person name="Ferrari E."/>
            <person name="Hoch J.A."/>
        </authorList>
    </citation>
    <scope>NUCLEOTIDE SEQUENCE [GENOMIC DNA]</scope>
</reference>
<reference key="4">
    <citation type="journal article" date="1996" name="Microbiology">
        <title>Systematic sequencing of the 283 kb 210 degrees-232 degrees region of the Bacillus subtilis genome containing the skin element and many sporulation genes.</title>
        <authorList>
            <person name="Mizuno M."/>
            <person name="Masuda S."/>
            <person name="Takemaru K."/>
            <person name="Hosono S."/>
            <person name="Sato T."/>
            <person name="Takeuchi M."/>
            <person name="Kobayashi Y."/>
        </authorList>
    </citation>
    <scope>NUCLEOTIDE SEQUENCE [GENOMIC DNA]</scope>
    <source>
        <strain>168 / JH642</strain>
    </source>
</reference>
<reference key="5">
    <citation type="journal article" date="1997" name="Nature">
        <title>The complete genome sequence of the Gram-positive bacterium Bacillus subtilis.</title>
        <authorList>
            <person name="Kunst F."/>
            <person name="Ogasawara N."/>
            <person name="Moszer I."/>
            <person name="Albertini A.M."/>
            <person name="Alloni G."/>
            <person name="Azevedo V."/>
            <person name="Bertero M.G."/>
            <person name="Bessieres P."/>
            <person name="Bolotin A."/>
            <person name="Borchert S."/>
            <person name="Borriss R."/>
            <person name="Boursier L."/>
            <person name="Brans A."/>
            <person name="Braun M."/>
            <person name="Brignell S.C."/>
            <person name="Bron S."/>
            <person name="Brouillet S."/>
            <person name="Bruschi C.V."/>
            <person name="Caldwell B."/>
            <person name="Capuano V."/>
            <person name="Carter N.M."/>
            <person name="Choi S.-K."/>
            <person name="Codani J.-J."/>
            <person name="Connerton I.F."/>
            <person name="Cummings N.J."/>
            <person name="Daniel R.A."/>
            <person name="Denizot F."/>
            <person name="Devine K.M."/>
            <person name="Duesterhoeft A."/>
            <person name="Ehrlich S.D."/>
            <person name="Emmerson P.T."/>
            <person name="Entian K.-D."/>
            <person name="Errington J."/>
            <person name="Fabret C."/>
            <person name="Ferrari E."/>
            <person name="Foulger D."/>
            <person name="Fritz C."/>
            <person name="Fujita M."/>
            <person name="Fujita Y."/>
            <person name="Fuma S."/>
            <person name="Galizzi A."/>
            <person name="Galleron N."/>
            <person name="Ghim S.-Y."/>
            <person name="Glaser P."/>
            <person name="Goffeau A."/>
            <person name="Golightly E.J."/>
            <person name="Grandi G."/>
            <person name="Guiseppi G."/>
            <person name="Guy B.J."/>
            <person name="Haga K."/>
            <person name="Haiech J."/>
            <person name="Harwood C.R."/>
            <person name="Henaut A."/>
            <person name="Hilbert H."/>
            <person name="Holsappel S."/>
            <person name="Hosono S."/>
            <person name="Hullo M.-F."/>
            <person name="Itaya M."/>
            <person name="Jones L.-M."/>
            <person name="Joris B."/>
            <person name="Karamata D."/>
            <person name="Kasahara Y."/>
            <person name="Klaerr-Blanchard M."/>
            <person name="Klein C."/>
            <person name="Kobayashi Y."/>
            <person name="Koetter P."/>
            <person name="Koningstein G."/>
            <person name="Krogh S."/>
            <person name="Kumano M."/>
            <person name="Kurita K."/>
            <person name="Lapidus A."/>
            <person name="Lardinois S."/>
            <person name="Lauber J."/>
            <person name="Lazarevic V."/>
            <person name="Lee S.-M."/>
            <person name="Levine A."/>
            <person name="Liu H."/>
            <person name="Masuda S."/>
            <person name="Mauel C."/>
            <person name="Medigue C."/>
            <person name="Medina N."/>
            <person name="Mellado R.P."/>
            <person name="Mizuno M."/>
            <person name="Moestl D."/>
            <person name="Nakai S."/>
            <person name="Noback M."/>
            <person name="Noone D."/>
            <person name="O'Reilly M."/>
            <person name="Ogawa K."/>
            <person name="Ogiwara A."/>
            <person name="Oudega B."/>
            <person name="Park S.-H."/>
            <person name="Parro V."/>
            <person name="Pohl T.M."/>
            <person name="Portetelle D."/>
            <person name="Porwollik S."/>
            <person name="Prescott A.M."/>
            <person name="Presecan E."/>
            <person name="Pujic P."/>
            <person name="Purnelle B."/>
            <person name="Rapoport G."/>
            <person name="Rey M."/>
            <person name="Reynolds S."/>
            <person name="Rieger M."/>
            <person name="Rivolta C."/>
            <person name="Rocha E."/>
            <person name="Roche B."/>
            <person name="Rose M."/>
            <person name="Sadaie Y."/>
            <person name="Sato T."/>
            <person name="Scanlan E."/>
            <person name="Schleich S."/>
            <person name="Schroeter R."/>
            <person name="Scoffone F."/>
            <person name="Sekiguchi J."/>
            <person name="Sekowska A."/>
            <person name="Seror S.J."/>
            <person name="Serror P."/>
            <person name="Shin B.-S."/>
            <person name="Soldo B."/>
            <person name="Sorokin A."/>
            <person name="Tacconi E."/>
            <person name="Takagi T."/>
            <person name="Takahashi H."/>
            <person name="Takemaru K."/>
            <person name="Takeuchi M."/>
            <person name="Tamakoshi A."/>
            <person name="Tanaka T."/>
            <person name="Terpstra P."/>
            <person name="Tognoni A."/>
            <person name="Tosato V."/>
            <person name="Uchiyama S."/>
            <person name="Vandenbol M."/>
            <person name="Vannier F."/>
            <person name="Vassarotti A."/>
            <person name="Viari A."/>
            <person name="Wambutt R."/>
            <person name="Wedler E."/>
            <person name="Wedler H."/>
            <person name="Weitzenegger T."/>
            <person name="Winters P."/>
            <person name="Wipat A."/>
            <person name="Yamamoto H."/>
            <person name="Yamane K."/>
            <person name="Yasumoto K."/>
            <person name="Yata K."/>
            <person name="Yoshida K."/>
            <person name="Yoshikawa H.-F."/>
            <person name="Zumstein E."/>
            <person name="Yoshikawa H."/>
            <person name="Danchin A."/>
        </authorList>
    </citation>
    <scope>NUCLEOTIDE SEQUENCE [LARGE SCALE GENOMIC DNA]</scope>
    <source>
        <strain>168</strain>
    </source>
</reference>
<reference key="6">
    <citation type="journal article" date="1997" name="Mol. Microbiol.">
        <title>SpoIVB has two distinct functions during spore formation in Bacillus subtilis.</title>
        <authorList>
            <person name="Oke V."/>
            <person name="Shchepetov M."/>
            <person name="Cutting S."/>
        </authorList>
    </citation>
    <scope>NUCLEOTIDE SEQUENCE [GENOMIC DNA] OF 1-62</scope>
    <source>
        <strain>168 / JH642</strain>
    </source>
</reference>
<reference key="7">
    <citation type="journal article" date="1988" name="J. Gen. Microbiol.">
        <title>New suppressor mutation sur0B of spo0B and spo0F mutations in Bacillus subtilis.</title>
        <authorList>
            <person name="Shoji K."/>
            <person name="Hiratsuka S."/>
            <person name="Kawamura F."/>
            <person name="Kobayashi Y."/>
        </authorList>
    </citation>
    <scope>NUCLEOTIDE SEQUENCE [GENOMIC DNA] OF 1-16</scope>
</reference>
<reference key="8">
    <citation type="journal article" date="1990" name="J. Mol. Biol.">
        <title>Novel mutations that alter the regulation of sporulation in Bacillus subtilis. Evidence that phosphorylation of regulatory protein SpoOA controls the initiation of sporulation.</title>
        <authorList>
            <person name="Olmedo G."/>
            <person name="Gottlin Ninfa E."/>
            <person name="Stock J."/>
            <person name="Youngman P."/>
        </authorList>
    </citation>
    <scope>MUTAGENESIS OF ASN-12; PRO-60; ALA-87 AND GLN-90</scope>
</reference>
<reference key="9">
    <citation type="journal article" date="2022" name="Microbiology">
        <title>Prophage-encoded small protein YqaH counteracts the activities of the replication initiator DnaA in Bacillus subtilis.</title>
        <authorList>
            <person name="Ventroux M."/>
            <person name="Noirot-Gros M.F."/>
        </authorList>
    </citation>
    <scope>INTERACTION WITH YQAH</scope>
    <source>
        <strain>168</strain>
    </source>
</reference>
<reference key="10">
    <citation type="journal article" date="2002" name="Structure">
        <title>DNA complexed structure of the key transcription factor initiating development in sporulating bacteria.</title>
        <authorList>
            <person name="Zhao H."/>
            <person name="Msadek T."/>
            <person name="Zapf J."/>
            <person name="Madhusudan X."/>
            <person name="Hoch J.A."/>
            <person name="Varughese K.I."/>
        </authorList>
    </citation>
    <scope>X-RAY CRYSTALLOGRAPHY (2.3 ANGSTROMS) OF 148-267</scope>
</reference>
<dbReference type="EMBL" id="M10082">
    <property type="protein sequence ID" value="AAA22786.1"/>
    <property type="molecule type" value="Genomic_DNA"/>
</dbReference>
<dbReference type="EMBL" id="D84432">
    <property type="protein sequence ID" value="BAA12581.1"/>
    <property type="molecule type" value="Genomic_DNA"/>
</dbReference>
<dbReference type="EMBL" id="AL009126">
    <property type="protein sequence ID" value="CAB14353.1"/>
    <property type="molecule type" value="Genomic_DNA"/>
</dbReference>
<dbReference type="EMBL" id="U68235">
    <property type="protein sequence ID" value="AAC44872.1"/>
    <property type="molecule type" value="Genomic_DNA"/>
</dbReference>
<dbReference type="EMBL" id="M23656">
    <property type="protein sequence ID" value="AAA22842.1"/>
    <property type="molecule type" value="Genomic_DNA"/>
</dbReference>
<dbReference type="PIR" id="A94036">
    <property type="entry name" value="SZBS0A"/>
</dbReference>
<dbReference type="RefSeq" id="NP_390302.1">
    <property type="nucleotide sequence ID" value="NC_000964.3"/>
</dbReference>
<dbReference type="RefSeq" id="WP_003226427.1">
    <property type="nucleotide sequence ID" value="NZ_OZ025638.1"/>
</dbReference>
<dbReference type="PDB" id="1LQ1">
    <property type="method" value="X-ray"/>
    <property type="resolution" value="2.30 A"/>
    <property type="chains" value="A/B/C/D=148-267"/>
</dbReference>
<dbReference type="PDBsum" id="1LQ1"/>
<dbReference type="SMR" id="P06534"/>
<dbReference type="FunCoup" id="P06534">
    <property type="interactions" value="183"/>
</dbReference>
<dbReference type="STRING" id="224308.BSU24220"/>
<dbReference type="jPOST" id="P06534"/>
<dbReference type="PaxDb" id="224308-BSU24220"/>
<dbReference type="EnsemblBacteria" id="CAB14353">
    <property type="protein sequence ID" value="CAB14353"/>
    <property type="gene ID" value="BSU_24220"/>
</dbReference>
<dbReference type="GeneID" id="86873031"/>
<dbReference type="GeneID" id="938655"/>
<dbReference type="KEGG" id="bsu:BSU24220"/>
<dbReference type="PATRIC" id="fig|224308.179.peg.2639"/>
<dbReference type="eggNOG" id="COG0745">
    <property type="taxonomic scope" value="Bacteria"/>
</dbReference>
<dbReference type="InParanoid" id="P06534"/>
<dbReference type="OrthoDB" id="9793299at2"/>
<dbReference type="PhylomeDB" id="P06534"/>
<dbReference type="BioCyc" id="BSUB:BSU24220-MONOMER"/>
<dbReference type="EvolutionaryTrace" id="P06534"/>
<dbReference type="PRO" id="PR:P06534"/>
<dbReference type="Proteomes" id="UP000001570">
    <property type="component" value="Chromosome"/>
</dbReference>
<dbReference type="GO" id="GO:0005737">
    <property type="term" value="C:cytoplasm"/>
    <property type="evidence" value="ECO:0007669"/>
    <property type="project" value="UniProtKB-SubCell"/>
</dbReference>
<dbReference type="GO" id="GO:0005509">
    <property type="term" value="F:calcium ion binding"/>
    <property type="evidence" value="ECO:0007669"/>
    <property type="project" value="InterPro"/>
</dbReference>
<dbReference type="GO" id="GO:0003677">
    <property type="term" value="F:DNA binding"/>
    <property type="evidence" value="ECO:0007669"/>
    <property type="project" value="UniProtKB-KW"/>
</dbReference>
<dbReference type="GO" id="GO:0003700">
    <property type="term" value="F:DNA-binding transcription factor activity"/>
    <property type="evidence" value="ECO:0007669"/>
    <property type="project" value="InterPro"/>
</dbReference>
<dbReference type="GO" id="GO:0008356">
    <property type="term" value="P:asymmetric cell division"/>
    <property type="evidence" value="ECO:0000316"/>
    <property type="project" value="UniProtKB"/>
</dbReference>
<dbReference type="GO" id="GO:0090529">
    <property type="term" value="P:cell septum assembly"/>
    <property type="evidence" value="ECO:0000316"/>
    <property type="project" value="UniProtKB"/>
</dbReference>
<dbReference type="GO" id="GO:0051606">
    <property type="term" value="P:detection of stimulus"/>
    <property type="evidence" value="ECO:0007669"/>
    <property type="project" value="InterPro"/>
</dbReference>
<dbReference type="GO" id="GO:0000160">
    <property type="term" value="P:phosphorelay signal transduction system"/>
    <property type="evidence" value="ECO:0007669"/>
    <property type="project" value="UniProtKB-KW"/>
</dbReference>
<dbReference type="GO" id="GO:0045893">
    <property type="term" value="P:positive regulation of DNA-templated transcription"/>
    <property type="evidence" value="ECO:0000315"/>
    <property type="project" value="CACAO"/>
</dbReference>
<dbReference type="GO" id="GO:0045881">
    <property type="term" value="P:positive regulation of sporulation resulting in formation of a cellular spore"/>
    <property type="evidence" value="ECO:0000316"/>
    <property type="project" value="UniProtKB"/>
</dbReference>
<dbReference type="GO" id="GO:0090606">
    <property type="term" value="P:single-species surface biofilm formation"/>
    <property type="evidence" value="ECO:0000315"/>
    <property type="project" value="CACAO"/>
</dbReference>
<dbReference type="GO" id="GO:0030435">
    <property type="term" value="P:sporulation resulting in formation of a cellular spore"/>
    <property type="evidence" value="ECO:0007669"/>
    <property type="project" value="UniProtKB-KW"/>
</dbReference>
<dbReference type="CDD" id="cd17561">
    <property type="entry name" value="REC_Spo0A"/>
    <property type="match status" value="1"/>
</dbReference>
<dbReference type="FunFam" id="1.10.10.10:FF:000107">
    <property type="entry name" value="Stage 0 sporulation protein A"/>
    <property type="match status" value="1"/>
</dbReference>
<dbReference type="FunFam" id="3.40.50.2300:FF:000154">
    <property type="entry name" value="Stage 0 sporulation protein A"/>
    <property type="match status" value="1"/>
</dbReference>
<dbReference type="Gene3D" id="3.40.50.2300">
    <property type="match status" value="1"/>
</dbReference>
<dbReference type="Gene3D" id="1.10.10.10">
    <property type="entry name" value="Winged helix-like DNA-binding domain superfamily/Winged helix DNA-binding domain"/>
    <property type="match status" value="1"/>
</dbReference>
<dbReference type="InterPro" id="IPR011006">
    <property type="entry name" value="CheY-like_superfamily"/>
</dbReference>
<dbReference type="InterPro" id="IPR016032">
    <property type="entry name" value="Sig_transdc_resp-reg_C-effctor"/>
</dbReference>
<dbReference type="InterPro" id="IPR001789">
    <property type="entry name" value="Sig_transdc_resp-reg_receiver"/>
</dbReference>
<dbReference type="InterPro" id="IPR014879">
    <property type="entry name" value="Spo0A_C"/>
</dbReference>
<dbReference type="InterPro" id="IPR012052">
    <property type="entry name" value="Spore_0_A"/>
</dbReference>
<dbReference type="InterPro" id="IPR052048">
    <property type="entry name" value="ST_Response_Regulator"/>
</dbReference>
<dbReference type="InterPro" id="IPR036388">
    <property type="entry name" value="WH-like_DNA-bd_sf"/>
</dbReference>
<dbReference type="NCBIfam" id="TIGR02875">
    <property type="entry name" value="spore_0_A"/>
    <property type="match status" value="1"/>
</dbReference>
<dbReference type="PANTHER" id="PTHR43228:SF5">
    <property type="entry name" value="STAGE 0 SPORULATION PROTEIN A"/>
    <property type="match status" value="1"/>
</dbReference>
<dbReference type="PANTHER" id="PTHR43228">
    <property type="entry name" value="TWO-COMPONENT RESPONSE REGULATOR"/>
    <property type="match status" value="1"/>
</dbReference>
<dbReference type="Pfam" id="PF00072">
    <property type="entry name" value="Response_reg"/>
    <property type="match status" value="1"/>
</dbReference>
<dbReference type="Pfam" id="PF08769">
    <property type="entry name" value="Spo0A_C"/>
    <property type="match status" value="1"/>
</dbReference>
<dbReference type="PIRSF" id="PIRSF002937">
    <property type="entry name" value="Res_reg_Spo0A"/>
    <property type="match status" value="1"/>
</dbReference>
<dbReference type="SMART" id="SM00448">
    <property type="entry name" value="REC"/>
    <property type="match status" value="1"/>
</dbReference>
<dbReference type="SUPFAM" id="SSF46894">
    <property type="entry name" value="C-terminal effector domain of the bipartite response regulators"/>
    <property type="match status" value="1"/>
</dbReference>
<dbReference type="SUPFAM" id="SSF52172">
    <property type="entry name" value="CheY-like"/>
    <property type="match status" value="1"/>
</dbReference>
<dbReference type="PROSITE" id="PS50110">
    <property type="entry name" value="RESPONSE_REGULATORY"/>
    <property type="match status" value="1"/>
</dbReference>
<protein>
    <recommendedName>
        <fullName>Stage 0 sporulation protein A</fullName>
    </recommendedName>
    <alternativeName>
        <fullName>Stage 0 sporulation protein C</fullName>
    </alternativeName>
    <alternativeName>
        <fullName>Stage 0 sporulation protein G</fullName>
    </alternativeName>
</protein>
<organism>
    <name type="scientific">Bacillus subtilis (strain 168)</name>
    <dbReference type="NCBI Taxonomy" id="224308"/>
    <lineage>
        <taxon>Bacteria</taxon>
        <taxon>Bacillati</taxon>
        <taxon>Bacillota</taxon>
        <taxon>Bacilli</taxon>
        <taxon>Bacillales</taxon>
        <taxon>Bacillaceae</taxon>
        <taxon>Bacillus</taxon>
    </lineage>
</organism>
<evidence type="ECO:0000250" key="1"/>
<evidence type="ECO:0000255" key="2"/>
<evidence type="ECO:0000255" key="3">
    <source>
        <dbReference type="PROSITE-ProRule" id="PRU00169"/>
    </source>
</evidence>
<evidence type="ECO:0000256" key="4">
    <source>
        <dbReference type="SAM" id="MobiDB-lite"/>
    </source>
</evidence>
<evidence type="ECO:0000269" key="5">
    <source>
    </source>
</evidence>
<evidence type="ECO:0000269" key="6">
    <source>
    </source>
</evidence>
<evidence type="ECO:0000305" key="7"/>
<evidence type="ECO:0007829" key="8">
    <source>
        <dbReference type="PDB" id="1LQ1"/>
    </source>
</evidence>
<accession>P06534</accession>
<accession>P70990</accession>